<name>LEXA_FINM2</name>
<accession>B0S1C5</accession>
<evidence type="ECO:0000255" key="1">
    <source>
        <dbReference type="HAMAP-Rule" id="MF_00015"/>
    </source>
</evidence>
<sequence length="208" mass="23761">MYDDLTSKQIEILKFIKRYIDYKGYPPAIREIGDSLNINSTSTVHNNILKLEMKGYLRRDPLKNRALEIIDSVYEEQENEIKKETIDVPIVGKVQAGMPILAIENVEDTFPLPIEYTSQGIVFILKVQGESMIEDGILNGDKIIVRKQNTANNGDIVVALMDESATVKRFYRHSDHIELRPSNSTMYPIIVKDVEILGKVIGLYRTIY</sequence>
<protein>
    <recommendedName>
        <fullName evidence="1">LexA repressor</fullName>
        <ecNumber evidence="1">3.4.21.88</ecNumber>
    </recommendedName>
</protein>
<gene>
    <name evidence="1" type="primary">lexA</name>
    <name type="ordered locus">FMG_0747</name>
</gene>
<proteinExistence type="inferred from homology"/>
<feature type="chain" id="PRO_1000089566" description="LexA repressor">
    <location>
        <begin position="1"/>
        <end position="208"/>
    </location>
</feature>
<feature type="DNA-binding region" description="H-T-H motif" evidence="1">
    <location>
        <begin position="29"/>
        <end position="49"/>
    </location>
</feature>
<feature type="active site" description="For autocatalytic cleavage activity" evidence="1">
    <location>
        <position position="131"/>
    </location>
</feature>
<feature type="active site" description="For autocatalytic cleavage activity" evidence="1">
    <location>
        <position position="168"/>
    </location>
</feature>
<feature type="site" description="Cleavage; by autolysis" evidence="1">
    <location>
        <begin position="96"/>
        <end position="97"/>
    </location>
</feature>
<reference key="1">
    <citation type="journal article" date="2008" name="DNA Res.">
        <title>Complete genome sequence of Finegoldia magna, an anaerobic opportunistic pathogen.</title>
        <authorList>
            <person name="Goto T."/>
            <person name="Yamashita A."/>
            <person name="Hirakawa H."/>
            <person name="Matsutani M."/>
            <person name="Todo K."/>
            <person name="Ohshima K."/>
            <person name="Toh H."/>
            <person name="Miyamoto K."/>
            <person name="Kuhara S."/>
            <person name="Hattori M."/>
            <person name="Shimizu T."/>
            <person name="Akimoto S."/>
        </authorList>
    </citation>
    <scope>NUCLEOTIDE SEQUENCE [LARGE SCALE GENOMIC DNA]</scope>
    <source>
        <strain>ATCC 29328 / DSM 20472 / WAL 2508</strain>
    </source>
</reference>
<keyword id="KW-0068">Autocatalytic cleavage</keyword>
<keyword id="KW-0227">DNA damage</keyword>
<keyword id="KW-0234">DNA repair</keyword>
<keyword id="KW-0235">DNA replication</keyword>
<keyword id="KW-0238">DNA-binding</keyword>
<keyword id="KW-0378">Hydrolase</keyword>
<keyword id="KW-1185">Reference proteome</keyword>
<keyword id="KW-0678">Repressor</keyword>
<keyword id="KW-0742">SOS response</keyword>
<keyword id="KW-0804">Transcription</keyword>
<keyword id="KW-0805">Transcription regulation</keyword>
<comment type="function">
    <text evidence="1">Represses a number of genes involved in the response to DNA damage (SOS response), including recA and lexA. In the presence of single-stranded DNA, RecA interacts with LexA causing an autocatalytic cleavage which disrupts the DNA-binding part of LexA, leading to derepression of the SOS regulon and eventually DNA repair.</text>
</comment>
<comment type="catalytic activity">
    <reaction evidence="1">
        <text>Hydrolysis of Ala-|-Gly bond in repressor LexA.</text>
        <dbReference type="EC" id="3.4.21.88"/>
    </reaction>
</comment>
<comment type="subunit">
    <text evidence="1">Homodimer.</text>
</comment>
<comment type="similarity">
    <text evidence="1">Belongs to the peptidase S24 family.</text>
</comment>
<organism>
    <name type="scientific">Finegoldia magna (strain ATCC 29328 / DSM 20472 / WAL 2508)</name>
    <name type="common">Peptostreptococcus magnus</name>
    <dbReference type="NCBI Taxonomy" id="334413"/>
    <lineage>
        <taxon>Bacteria</taxon>
        <taxon>Bacillati</taxon>
        <taxon>Bacillota</taxon>
        <taxon>Tissierellia</taxon>
        <taxon>Tissierellales</taxon>
        <taxon>Peptoniphilaceae</taxon>
        <taxon>Finegoldia</taxon>
    </lineage>
</organism>
<dbReference type="EC" id="3.4.21.88" evidence="1"/>
<dbReference type="EMBL" id="AP008971">
    <property type="protein sequence ID" value="BAG08165.1"/>
    <property type="molecule type" value="Genomic_DNA"/>
</dbReference>
<dbReference type="RefSeq" id="WP_002838320.1">
    <property type="nucleotide sequence ID" value="NC_010376.1"/>
</dbReference>
<dbReference type="SMR" id="B0S1C5"/>
<dbReference type="STRING" id="334413.FMG_0747"/>
<dbReference type="MEROPS" id="S24.001"/>
<dbReference type="KEGG" id="fma:FMG_0747"/>
<dbReference type="eggNOG" id="COG1974">
    <property type="taxonomic scope" value="Bacteria"/>
</dbReference>
<dbReference type="HOGENOM" id="CLU_066192_45_1_9"/>
<dbReference type="Proteomes" id="UP000001319">
    <property type="component" value="Chromosome"/>
</dbReference>
<dbReference type="GO" id="GO:0003677">
    <property type="term" value="F:DNA binding"/>
    <property type="evidence" value="ECO:0007669"/>
    <property type="project" value="UniProtKB-UniRule"/>
</dbReference>
<dbReference type="GO" id="GO:0004252">
    <property type="term" value="F:serine-type endopeptidase activity"/>
    <property type="evidence" value="ECO:0007669"/>
    <property type="project" value="UniProtKB-UniRule"/>
</dbReference>
<dbReference type="GO" id="GO:0006281">
    <property type="term" value="P:DNA repair"/>
    <property type="evidence" value="ECO:0007669"/>
    <property type="project" value="UniProtKB-UniRule"/>
</dbReference>
<dbReference type="GO" id="GO:0006260">
    <property type="term" value="P:DNA replication"/>
    <property type="evidence" value="ECO:0007669"/>
    <property type="project" value="UniProtKB-UniRule"/>
</dbReference>
<dbReference type="GO" id="GO:0045892">
    <property type="term" value="P:negative regulation of DNA-templated transcription"/>
    <property type="evidence" value="ECO:0007669"/>
    <property type="project" value="UniProtKB-UniRule"/>
</dbReference>
<dbReference type="GO" id="GO:0006508">
    <property type="term" value="P:proteolysis"/>
    <property type="evidence" value="ECO:0007669"/>
    <property type="project" value="InterPro"/>
</dbReference>
<dbReference type="GO" id="GO:0009432">
    <property type="term" value="P:SOS response"/>
    <property type="evidence" value="ECO:0007669"/>
    <property type="project" value="UniProtKB-UniRule"/>
</dbReference>
<dbReference type="CDD" id="cd06529">
    <property type="entry name" value="S24_LexA-like"/>
    <property type="match status" value="1"/>
</dbReference>
<dbReference type="FunFam" id="2.10.109.10:FF:000001">
    <property type="entry name" value="LexA repressor"/>
    <property type="match status" value="1"/>
</dbReference>
<dbReference type="Gene3D" id="2.10.109.10">
    <property type="entry name" value="Umud Fragment, subunit A"/>
    <property type="match status" value="1"/>
</dbReference>
<dbReference type="Gene3D" id="1.10.10.10">
    <property type="entry name" value="Winged helix-like DNA-binding domain superfamily/Winged helix DNA-binding domain"/>
    <property type="match status" value="1"/>
</dbReference>
<dbReference type="HAMAP" id="MF_00015">
    <property type="entry name" value="LexA"/>
    <property type="match status" value="1"/>
</dbReference>
<dbReference type="InterPro" id="IPR006200">
    <property type="entry name" value="LexA"/>
</dbReference>
<dbReference type="InterPro" id="IPR039418">
    <property type="entry name" value="LexA-like"/>
</dbReference>
<dbReference type="InterPro" id="IPR036286">
    <property type="entry name" value="LexA/Signal_pep-like_sf"/>
</dbReference>
<dbReference type="InterPro" id="IPR006199">
    <property type="entry name" value="LexA_DNA-bd_dom"/>
</dbReference>
<dbReference type="InterPro" id="IPR050077">
    <property type="entry name" value="LexA_repressor"/>
</dbReference>
<dbReference type="InterPro" id="IPR006197">
    <property type="entry name" value="Peptidase_S24_LexA"/>
</dbReference>
<dbReference type="InterPro" id="IPR015927">
    <property type="entry name" value="Peptidase_S24_S26A/B/C"/>
</dbReference>
<dbReference type="InterPro" id="IPR036388">
    <property type="entry name" value="WH-like_DNA-bd_sf"/>
</dbReference>
<dbReference type="InterPro" id="IPR036390">
    <property type="entry name" value="WH_DNA-bd_sf"/>
</dbReference>
<dbReference type="NCBIfam" id="TIGR00498">
    <property type="entry name" value="lexA"/>
    <property type="match status" value="1"/>
</dbReference>
<dbReference type="PANTHER" id="PTHR33516">
    <property type="entry name" value="LEXA REPRESSOR"/>
    <property type="match status" value="1"/>
</dbReference>
<dbReference type="PANTHER" id="PTHR33516:SF2">
    <property type="entry name" value="LEXA REPRESSOR-RELATED"/>
    <property type="match status" value="1"/>
</dbReference>
<dbReference type="Pfam" id="PF01726">
    <property type="entry name" value="LexA_DNA_bind"/>
    <property type="match status" value="1"/>
</dbReference>
<dbReference type="Pfam" id="PF00717">
    <property type="entry name" value="Peptidase_S24"/>
    <property type="match status" value="1"/>
</dbReference>
<dbReference type="PRINTS" id="PR00726">
    <property type="entry name" value="LEXASERPTASE"/>
</dbReference>
<dbReference type="SUPFAM" id="SSF51306">
    <property type="entry name" value="LexA/Signal peptidase"/>
    <property type="match status" value="1"/>
</dbReference>
<dbReference type="SUPFAM" id="SSF46785">
    <property type="entry name" value="Winged helix' DNA-binding domain"/>
    <property type="match status" value="1"/>
</dbReference>